<keyword id="KW-0378">Hydrolase</keyword>
<sequence>MLDREGFRPNVGIILLNARNEVFWGKRLREHSWQFPQGGIKYGETPMQAMYRELHEETGLHPEHVKIIGRTRDWLRYEVPDKFIKREVRGHYRGQKQIWFLLRMVGRDCDICLRATDHPEFDAWRWNEYWVPLDAVIEFKRDVYQLALTELSRFLRRPAQRAEKPRGPRPLRYPRIGGAPAQQTLTIVDTSVVCSEIEVEARTLDEMPPRVIIGK</sequence>
<comment type="function">
    <text evidence="1">Accelerates the degradation of transcripts by removing pyrophosphate from the 5'-end of triphosphorylated RNA, leading to a more labile monophosphorylated state that can stimulate subsequent ribonuclease cleavage.</text>
</comment>
<comment type="cofactor">
    <cofactor evidence="1">
        <name>a divalent metal cation</name>
        <dbReference type="ChEBI" id="CHEBI:60240"/>
    </cofactor>
</comment>
<comment type="similarity">
    <text evidence="1">Belongs to the Nudix hydrolase family. RppH subfamily.</text>
</comment>
<organism>
    <name type="scientific">Burkholderia vietnamiensis (strain G4 / LMG 22486)</name>
    <name type="common">Burkholderia cepacia (strain R1808)</name>
    <dbReference type="NCBI Taxonomy" id="269482"/>
    <lineage>
        <taxon>Bacteria</taxon>
        <taxon>Pseudomonadati</taxon>
        <taxon>Pseudomonadota</taxon>
        <taxon>Betaproteobacteria</taxon>
        <taxon>Burkholderiales</taxon>
        <taxon>Burkholderiaceae</taxon>
        <taxon>Burkholderia</taxon>
        <taxon>Burkholderia cepacia complex</taxon>
    </lineage>
</organism>
<protein>
    <recommendedName>
        <fullName evidence="1">RNA pyrophosphohydrolase</fullName>
        <ecNumber evidence="1">3.6.1.-</ecNumber>
    </recommendedName>
    <alternativeName>
        <fullName evidence="1">(Di)nucleoside polyphosphate hydrolase</fullName>
    </alternativeName>
</protein>
<proteinExistence type="inferred from homology"/>
<evidence type="ECO:0000255" key="1">
    <source>
        <dbReference type="HAMAP-Rule" id="MF_00298"/>
    </source>
</evidence>
<dbReference type="EC" id="3.6.1.-" evidence="1"/>
<dbReference type="EMBL" id="CP000614">
    <property type="protein sequence ID" value="ABO53574.1"/>
    <property type="molecule type" value="Genomic_DNA"/>
</dbReference>
<dbReference type="SMR" id="A4JBC1"/>
<dbReference type="KEGG" id="bvi:Bcep1808_0562"/>
<dbReference type="eggNOG" id="COG0494">
    <property type="taxonomic scope" value="Bacteria"/>
</dbReference>
<dbReference type="HOGENOM" id="CLU_087195_0_1_4"/>
<dbReference type="Proteomes" id="UP000002287">
    <property type="component" value="Chromosome 1"/>
</dbReference>
<dbReference type="GO" id="GO:0016462">
    <property type="term" value="F:pyrophosphatase activity"/>
    <property type="evidence" value="ECO:0007669"/>
    <property type="project" value="UniProtKB-ARBA"/>
</dbReference>
<dbReference type="CDD" id="cd03671">
    <property type="entry name" value="NUDIX_Ap4A_hydrolase_plant_like"/>
    <property type="match status" value="1"/>
</dbReference>
<dbReference type="Gene3D" id="3.90.79.10">
    <property type="entry name" value="Nucleoside Triphosphate Pyrophosphohydrolase"/>
    <property type="match status" value="1"/>
</dbReference>
<dbReference type="HAMAP" id="MF_00298">
    <property type="entry name" value="Nudix_RppH"/>
    <property type="match status" value="1"/>
</dbReference>
<dbReference type="InterPro" id="IPR020476">
    <property type="entry name" value="Nudix_hydrolase"/>
</dbReference>
<dbReference type="InterPro" id="IPR015797">
    <property type="entry name" value="NUDIX_hydrolase-like_dom_sf"/>
</dbReference>
<dbReference type="InterPro" id="IPR020084">
    <property type="entry name" value="NUDIX_hydrolase_CS"/>
</dbReference>
<dbReference type="InterPro" id="IPR000086">
    <property type="entry name" value="NUDIX_hydrolase_dom"/>
</dbReference>
<dbReference type="InterPro" id="IPR022927">
    <property type="entry name" value="RppH"/>
</dbReference>
<dbReference type="NCBIfam" id="NF001935">
    <property type="entry name" value="PRK00714.1-2"/>
    <property type="match status" value="1"/>
</dbReference>
<dbReference type="NCBIfam" id="NF001937">
    <property type="entry name" value="PRK00714.1-4"/>
    <property type="match status" value="1"/>
</dbReference>
<dbReference type="NCBIfam" id="NF001938">
    <property type="entry name" value="PRK00714.1-5"/>
    <property type="match status" value="1"/>
</dbReference>
<dbReference type="PANTHER" id="PTHR43736">
    <property type="entry name" value="ADP-RIBOSE PYROPHOSPHATASE"/>
    <property type="match status" value="1"/>
</dbReference>
<dbReference type="PANTHER" id="PTHR43736:SF1">
    <property type="entry name" value="DIHYDRONEOPTERIN TRIPHOSPHATE DIPHOSPHATASE"/>
    <property type="match status" value="1"/>
</dbReference>
<dbReference type="Pfam" id="PF00293">
    <property type="entry name" value="NUDIX"/>
    <property type="match status" value="1"/>
</dbReference>
<dbReference type="PRINTS" id="PR00502">
    <property type="entry name" value="NUDIXFAMILY"/>
</dbReference>
<dbReference type="SUPFAM" id="SSF55811">
    <property type="entry name" value="Nudix"/>
    <property type="match status" value="1"/>
</dbReference>
<dbReference type="PROSITE" id="PS51462">
    <property type="entry name" value="NUDIX"/>
    <property type="match status" value="1"/>
</dbReference>
<dbReference type="PROSITE" id="PS00893">
    <property type="entry name" value="NUDIX_BOX"/>
    <property type="match status" value="1"/>
</dbReference>
<name>RPPH_BURVG</name>
<accession>A4JBC1</accession>
<gene>
    <name evidence="1" type="primary">rppH</name>
    <name evidence="1" type="synonym">nudH</name>
    <name type="ordered locus">Bcep1808_0562</name>
</gene>
<reference key="1">
    <citation type="submission" date="2007-03" db="EMBL/GenBank/DDBJ databases">
        <title>Complete sequence of chromosome 1 of Burkholderia vietnamiensis G4.</title>
        <authorList>
            <consortium name="US DOE Joint Genome Institute"/>
            <person name="Copeland A."/>
            <person name="Lucas S."/>
            <person name="Lapidus A."/>
            <person name="Barry K."/>
            <person name="Detter J.C."/>
            <person name="Glavina del Rio T."/>
            <person name="Hammon N."/>
            <person name="Israni S."/>
            <person name="Dalin E."/>
            <person name="Tice H."/>
            <person name="Pitluck S."/>
            <person name="Chain P."/>
            <person name="Malfatti S."/>
            <person name="Shin M."/>
            <person name="Vergez L."/>
            <person name="Schmutz J."/>
            <person name="Larimer F."/>
            <person name="Land M."/>
            <person name="Hauser L."/>
            <person name="Kyrpides N."/>
            <person name="Tiedje J."/>
            <person name="Richardson P."/>
        </authorList>
    </citation>
    <scope>NUCLEOTIDE SEQUENCE [LARGE SCALE GENOMIC DNA]</scope>
    <source>
        <strain>G4 / LMG 22486</strain>
    </source>
</reference>
<feature type="chain" id="PRO_1000021940" description="RNA pyrophosphohydrolase">
    <location>
        <begin position="1"/>
        <end position="215"/>
    </location>
</feature>
<feature type="domain" description="Nudix hydrolase" evidence="1">
    <location>
        <begin position="6"/>
        <end position="149"/>
    </location>
</feature>
<feature type="short sequence motif" description="Nudix box">
    <location>
        <begin position="38"/>
        <end position="59"/>
    </location>
</feature>